<dbReference type="EMBL" id="CP001213">
    <property type="protein sequence ID" value="ACL28608.1"/>
    <property type="molecule type" value="Genomic_DNA"/>
</dbReference>
<dbReference type="RefSeq" id="WP_004268464.1">
    <property type="nucleotide sequence ID" value="NC_011835.1"/>
</dbReference>
<dbReference type="SMR" id="B8DVV7"/>
<dbReference type="STRING" id="442563.BLA_0306"/>
<dbReference type="GeneID" id="29696292"/>
<dbReference type="KEGG" id="bla:BLA_0306"/>
<dbReference type="HOGENOM" id="CLU_148518_0_0_11"/>
<dbReference type="Proteomes" id="UP000002456">
    <property type="component" value="Chromosome"/>
</dbReference>
<dbReference type="GO" id="GO:0022627">
    <property type="term" value="C:cytosolic small ribosomal subunit"/>
    <property type="evidence" value="ECO:0007669"/>
    <property type="project" value="TreeGrafter"/>
</dbReference>
<dbReference type="GO" id="GO:0019843">
    <property type="term" value="F:rRNA binding"/>
    <property type="evidence" value="ECO:0007669"/>
    <property type="project" value="UniProtKB-UniRule"/>
</dbReference>
<dbReference type="GO" id="GO:0003735">
    <property type="term" value="F:structural constituent of ribosome"/>
    <property type="evidence" value="ECO:0007669"/>
    <property type="project" value="InterPro"/>
</dbReference>
<dbReference type="GO" id="GO:0006412">
    <property type="term" value="P:translation"/>
    <property type="evidence" value="ECO:0007669"/>
    <property type="project" value="UniProtKB-UniRule"/>
</dbReference>
<dbReference type="CDD" id="cd00353">
    <property type="entry name" value="Ribosomal_S15p_S13e"/>
    <property type="match status" value="1"/>
</dbReference>
<dbReference type="FunFam" id="1.10.287.10:FF:000002">
    <property type="entry name" value="30S ribosomal protein S15"/>
    <property type="match status" value="1"/>
</dbReference>
<dbReference type="Gene3D" id="6.10.250.3130">
    <property type="match status" value="1"/>
</dbReference>
<dbReference type="Gene3D" id="1.10.287.10">
    <property type="entry name" value="S15/NS1, RNA-binding"/>
    <property type="match status" value="1"/>
</dbReference>
<dbReference type="HAMAP" id="MF_01343_B">
    <property type="entry name" value="Ribosomal_uS15_B"/>
    <property type="match status" value="1"/>
</dbReference>
<dbReference type="InterPro" id="IPR000589">
    <property type="entry name" value="Ribosomal_uS15"/>
</dbReference>
<dbReference type="InterPro" id="IPR005290">
    <property type="entry name" value="Ribosomal_uS15_bac-type"/>
</dbReference>
<dbReference type="InterPro" id="IPR009068">
    <property type="entry name" value="uS15_NS1_RNA-bd_sf"/>
</dbReference>
<dbReference type="NCBIfam" id="TIGR00952">
    <property type="entry name" value="S15_bact"/>
    <property type="match status" value="1"/>
</dbReference>
<dbReference type="PANTHER" id="PTHR23321">
    <property type="entry name" value="RIBOSOMAL PROTEIN S15, BACTERIAL AND ORGANELLAR"/>
    <property type="match status" value="1"/>
</dbReference>
<dbReference type="PANTHER" id="PTHR23321:SF26">
    <property type="entry name" value="SMALL RIBOSOMAL SUBUNIT PROTEIN US15M"/>
    <property type="match status" value="1"/>
</dbReference>
<dbReference type="Pfam" id="PF00312">
    <property type="entry name" value="Ribosomal_S15"/>
    <property type="match status" value="1"/>
</dbReference>
<dbReference type="SMART" id="SM01387">
    <property type="entry name" value="Ribosomal_S15"/>
    <property type="match status" value="1"/>
</dbReference>
<dbReference type="SUPFAM" id="SSF47060">
    <property type="entry name" value="S15/NS1 RNA-binding domain"/>
    <property type="match status" value="1"/>
</dbReference>
<dbReference type="PROSITE" id="PS00362">
    <property type="entry name" value="RIBOSOMAL_S15"/>
    <property type="match status" value="1"/>
</dbReference>
<feature type="chain" id="PRO_1000166401" description="Small ribosomal subunit protein uS15">
    <location>
        <begin position="1"/>
        <end position="89"/>
    </location>
</feature>
<reference key="1">
    <citation type="journal article" date="2009" name="J. Bacteriol.">
        <title>Genome sequence of the probiotic bacterium Bifidobacterium animalis subsp. lactis AD011.</title>
        <authorList>
            <person name="Kim J.F."/>
            <person name="Jeong H."/>
            <person name="Yu D.S."/>
            <person name="Choi S.-H."/>
            <person name="Hur C.-G."/>
            <person name="Park M.-S."/>
            <person name="Yoon S.H."/>
            <person name="Kim D.-W."/>
            <person name="Ji G.E."/>
            <person name="Park H.-S."/>
            <person name="Oh T.K."/>
        </authorList>
    </citation>
    <scope>NUCLEOTIDE SEQUENCE [LARGE SCALE GENOMIC DNA]</scope>
    <source>
        <strain>AD011</strain>
    </source>
</reference>
<evidence type="ECO:0000255" key="1">
    <source>
        <dbReference type="HAMAP-Rule" id="MF_01343"/>
    </source>
</evidence>
<evidence type="ECO:0000305" key="2"/>
<sequence>MALTAEEKQDIIAKYATHEGDTGSPEVQIALLTKRIADLTEHLKFHKHDHHSRRGLLLMVGDRRRLLDYLKKVDIERYRSLIERLGLRR</sequence>
<protein>
    <recommendedName>
        <fullName evidence="1">Small ribosomal subunit protein uS15</fullName>
    </recommendedName>
    <alternativeName>
        <fullName evidence="2">30S ribosomal protein S15</fullName>
    </alternativeName>
</protein>
<name>RS15_BIFA0</name>
<accession>B8DVV7</accession>
<gene>
    <name evidence="1" type="primary">rpsO</name>
    <name type="ordered locus">BLA_0306</name>
</gene>
<keyword id="KW-1185">Reference proteome</keyword>
<keyword id="KW-0687">Ribonucleoprotein</keyword>
<keyword id="KW-0689">Ribosomal protein</keyword>
<keyword id="KW-0694">RNA-binding</keyword>
<keyword id="KW-0699">rRNA-binding</keyword>
<organism>
    <name type="scientific">Bifidobacterium animalis subsp. lactis (strain AD011)</name>
    <dbReference type="NCBI Taxonomy" id="442563"/>
    <lineage>
        <taxon>Bacteria</taxon>
        <taxon>Bacillati</taxon>
        <taxon>Actinomycetota</taxon>
        <taxon>Actinomycetes</taxon>
        <taxon>Bifidobacteriales</taxon>
        <taxon>Bifidobacteriaceae</taxon>
        <taxon>Bifidobacterium</taxon>
    </lineage>
</organism>
<proteinExistence type="inferred from homology"/>
<comment type="function">
    <text evidence="1">One of the primary rRNA binding proteins, it binds directly to 16S rRNA where it helps nucleate assembly of the platform of the 30S subunit by binding and bridging several RNA helices of the 16S rRNA.</text>
</comment>
<comment type="function">
    <text evidence="1">Forms an intersubunit bridge (bridge B4) with the 23S rRNA of the 50S subunit in the ribosome.</text>
</comment>
<comment type="subunit">
    <text evidence="1">Part of the 30S ribosomal subunit. Forms a bridge to the 50S subunit in the 70S ribosome, contacting the 23S rRNA.</text>
</comment>
<comment type="similarity">
    <text evidence="1">Belongs to the universal ribosomal protein uS15 family.</text>
</comment>